<evidence type="ECO:0000250" key="1">
    <source>
        <dbReference type="UniProtKB" id="P03905"/>
    </source>
</evidence>
<evidence type="ECO:0000250" key="2">
    <source>
        <dbReference type="UniProtKB" id="P03910"/>
    </source>
</evidence>
<evidence type="ECO:0000255" key="3"/>
<evidence type="ECO:0000305" key="4"/>
<name>NU4M_BALMU</name>
<comment type="function">
    <text evidence="1">Core subunit of the mitochondrial membrane respiratory chain NADH dehydrogenase (Complex I) which catalyzes electron transfer from NADH through the respiratory chain, using ubiquinone as an electron acceptor. Essential for the catalytic activity and assembly of complex I.</text>
</comment>
<comment type="catalytic activity">
    <reaction evidence="1">
        <text>a ubiquinone + NADH + 5 H(+)(in) = a ubiquinol + NAD(+) + 4 H(+)(out)</text>
        <dbReference type="Rhea" id="RHEA:29091"/>
        <dbReference type="Rhea" id="RHEA-COMP:9565"/>
        <dbReference type="Rhea" id="RHEA-COMP:9566"/>
        <dbReference type="ChEBI" id="CHEBI:15378"/>
        <dbReference type="ChEBI" id="CHEBI:16389"/>
        <dbReference type="ChEBI" id="CHEBI:17976"/>
        <dbReference type="ChEBI" id="CHEBI:57540"/>
        <dbReference type="ChEBI" id="CHEBI:57945"/>
        <dbReference type="EC" id="7.1.1.2"/>
    </reaction>
</comment>
<comment type="subunit">
    <text evidence="2">Core subunit of respiratory chain NADH dehydrogenase (Complex I) which is composed of 45 different subunits.</text>
</comment>
<comment type="subcellular location">
    <subcellularLocation>
        <location evidence="2">Mitochondrion inner membrane</location>
        <topology evidence="3">Multi-pass membrane protein</topology>
    </subcellularLocation>
</comment>
<comment type="similarity">
    <text evidence="4">Belongs to the complex I subunit 4 family.</text>
</comment>
<gene>
    <name type="primary">MT-ND4</name>
    <name type="synonym">MTND4</name>
    <name type="synonym">NADH4</name>
    <name type="synonym">ND4</name>
</gene>
<dbReference type="EC" id="7.1.1.2" evidence="1"/>
<dbReference type="EMBL" id="X72204">
    <property type="protein sequence ID" value="CAA51004.1"/>
    <property type="molecule type" value="Genomic_DNA"/>
</dbReference>
<dbReference type="PIR" id="S41829">
    <property type="entry name" value="S41829"/>
</dbReference>
<dbReference type="RefSeq" id="NP_007065.1">
    <property type="nucleotide sequence ID" value="NC_001601.1"/>
</dbReference>
<dbReference type="SMR" id="P41298"/>
<dbReference type="GeneID" id="807734"/>
<dbReference type="KEGG" id="bmus:807734"/>
<dbReference type="CTD" id="4538"/>
<dbReference type="OrthoDB" id="564260at2759"/>
<dbReference type="Proteomes" id="UP000694857">
    <property type="component" value="Mitochondrion MT"/>
</dbReference>
<dbReference type="GO" id="GO:0005743">
    <property type="term" value="C:mitochondrial inner membrane"/>
    <property type="evidence" value="ECO:0000250"/>
    <property type="project" value="UniProtKB"/>
</dbReference>
<dbReference type="GO" id="GO:0008137">
    <property type="term" value="F:NADH dehydrogenase (ubiquinone) activity"/>
    <property type="evidence" value="ECO:0000250"/>
    <property type="project" value="UniProtKB"/>
</dbReference>
<dbReference type="GO" id="GO:0048039">
    <property type="term" value="F:ubiquinone binding"/>
    <property type="evidence" value="ECO:0007669"/>
    <property type="project" value="TreeGrafter"/>
</dbReference>
<dbReference type="GO" id="GO:0015990">
    <property type="term" value="P:electron transport coupled proton transport"/>
    <property type="evidence" value="ECO:0007669"/>
    <property type="project" value="TreeGrafter"/>
</dbReference>
<dbReference type="GO" id="GO:0006120">
    <property type="term" value="P:mitochondrial electron transport, NADH to ubiquinone"/>
    <property type="evidence" value="ECO:0000250"/>
    <property type="project" value="UniProtKB"/>
</dbReference>
<dbReference type="GO" id="GO:0032981">
    <property type="term" value="P:mitochondrial respiratory chain complex I assembly"/>
    <property type="evidence" value="ECO:0000250"/>
    <property type="project" value="UniProtKB"/>
</dbReference>
<dbReference type="InterPro" id="IPR000260">
    <property type="entry name" value="NADH4_N"/>
</dbReference>
<dbReference type="InterPro" id="IPR010227">
    <property type="entry name" value="NADH_Q_OxRdtase_chainM/4"/>
</dbReference>
<dbReference type="InterPro" id="IPR003918">
    <property type="entry name" value="NADH_UbQ_OxRdtase"/>
</dbReference>
<dbReference type="InterPro" id="IPR001750">
    <property type="entry name" value="ND/Mrp_TM"/>
</dbReference>
<dbReference type="NCBIfam" id="TIGR01972">
    <property type="entry name" value="NDH_I_M"/>
    <property type="match status" value="1"/>
</dbReference>
<dbReference type="PANTHER" id="PTHR43507">
    <property type="entry name" value="NADH-UBIQUINONE OXIDOREDUCTASE CHAIN 4"/>
    <property type="match status" value="1"/>
</dbReference>
<dbReference type="PANTHER" id="PTHR43507:SF20">
    <property type="entry name" value="NADH-UBIQUINONE OXIDOREDUCTASE CHAIN 4"/>
    <property type="match status" value="1"/>
</dbReference>
<dbReference type="Pfam" id="PF01059">
    <property type="entry name" value="Oxidored_q5_N"/>
    <property type="match status" value="1"/>
</dbReference>
<dbReference type="Pfam" id="PF00361">
    <property type="entry name" value="Proton_antipo_M"/>
    <property type="match status" value="1"/>
</dbReference>
<dbReference type="PRINTS" id="PR01437">
    <property type="entry name" value="NUOXDRDTASE4"/>
</dbReference>
<sequence>MLKFIIPTIMLMPLTWLSKNNLIWINSTAHSLLISFSSLLLLNQLNDNSLNYSLIFFSDPLSTPLLMLTMWLLPLMLMASQSHLIKEPPVRKKLYITMLIMLQALLIMTFTATELILFYIMFEATLIPTLIIITRWGNQTERLNAGLYFLFYTLIGSLPLLVALVYLQNTTGSLNFLLLQHWAKPLSASWSNIFMWLACMMAFLVKMPLYGLHLWLPKAHVEAPIAGSMVLAAVLLKLGGYGMLRITSMLNPLTEHMAYPFLMLSLWGMIMTSSICLRQTDLKSLIAYSSVSHMALVIAAILIQTPWSYMGATALMIAHGLTSSMLFCLANSNYERIHSRTMILARGLQVLLPLMATWWLLASLTNLALPPTINLVGELLVVMSVFSWSNPTILLMGANIVITALYTLYMLIMTQRGKHTHHINNIIPSFTREHALMALHIIPLLLLSLNPKIILGPLY</sequence>
<feature type="chain" id="PRO_0000117899" description="NADH-ubiquinone oxidoreductase chain 4">
    <location>
        <begin position="1"/>
        <end position="459"/>
    </location>
</feature>
<feature type="transmembrane region" description="Helical" evidence="3">
    <location>
        <begin position="22"/>
        <end position="42"/>
    </location>
</feature>
<feature type="transmembrane region" description="Helical" evidence="3">
    <location>
        <begin position="60"/>
        <end position="80"/>
    </location>
</feature>
<feature type="transmembrane region" description="Helical" evidence="3">
    <location>
        <begin position="92"/>
        <end position="112"/>
    </location>
</feature>
<feature type="transmembrane region" description="Helical" evidence="3">
    <location>
        <begin position="113"/>
        <end position="133"/>
    </location>
</feature>
<feature type="transmembrane region" description="Helical" evidence="3">
    <location>
        <begin position="147"/>
        <end position="167"/>
    </location>
</feature>
<feature type="transmembrane region" description="Helical" evidence="3">
    <location>
        <begin position="193"/>
        <end position="213"/>
    </location>
</feature>
<feature type="transmembrane region" description="Helical" evidence="3">
    <location>
        <begin position="224"/>
        <end position="244"/>
    </location>
</feature>
<feature type="transmembrane region" description="Helical" evidence="3">
    <location>
        <begin position="257"/>
        <end position="277"/>
    </location>
</feature>
<feature type="transmembrane region" description="Helical" evidence="3">
    <location>
        <begin position="284"/>
        <end position="303"/>
    </location>
</feature>
<feature type="transmembrane region" description="Helical" evidence="3">
    <location>
        <begin position="307"/>
        <end position="329"/>
    </location>
</feature>
<feature type="transmembrane region" description="Helical" evidence="3">
    <location>
        <begin position="350"/>
        <end position="370"/>
    </location>
</feature>
<feature type="transmembrane region" description="Helical" evidence="3">
    <location>
        <begin position="393"/>
        <end position="413"/>
    </location>
</feature>
<feature type="transmembrane region" description="Helical" evidence="3">
    <location>
        <begin position="435"/>
        <end position="455"/>
    </location>
</feature>
<protein>
    <recommendedName>
        <fullName>NADH-ubiquinone oxidoreductase chain 4</fullName>
        <ecNumber evidence="1">7.1.1.2</ecNumber>
    </recommendedName>
    <alternativeName>
        <fullName>NADH dehydrogenase subunit 4</fullName>
    </alternativeName>
</protein>
<organism>
    <name type="scientific">Balaenoptera musculus</name>
    <name type="common">Blue whale</name>
    <dbReference type="NCBI Taxonomy" id="9771"/>
    <lineage>
        <taxon>Eukaryota</taxon>
        <taxon>Metazoa</taxon>
        <taxon>Chordata</taxon>
        <taxon>Craniata</taxon>
        <taxon>Vertebrata</taxon>
        <taxon>Euteleostomi</taxon>
        <taxon>Mammalia</taxon>
        <taxon>Eutheria</taxon>
        <taxon>Laurasiatheria</taxon>
        <taxon>Artiodactyla</taxon>
        <taxon>Whippomorpha</taxon>
        <taxon>Cetacea</taxon>
        <taxon>Mysticeti</taxon>
        <taxon>Balaenopteridae</taxon>
        <taxon>Balaenoptera</taxon>
    </lineage>
</organism>
<keyword id="KW-0249">Electron transport</keyword>
<keyword id="KW-0472">Membrane</keyword>
<keyword id="KW-0496">Mitochondrion</keyword>
<keyword id="KW-0999">Mitochondrion inner membrane</keyword>
<keyword id="KW-0520">NAD</keyword>
<keyword id="KW-1185">Reference proteome</keyword>
<keyword id="KW-0679">Respiratory chain</keyword>
<keyword id="KW-1278">Translocase</keyword>
<keyword id="KW-0812">Transmembrane</keyword>
<keyword id="KW-1133">Transmembrane helix</keyword>
<keyword id="KW-0813">Transport</keyword>
<keyword id="KW-0830">Ubiquinone</keyword>
<geneLocation type="mitochondrion"/>
<accession>P41298</accession>
<reference key="1">
    <citation type="journal article" date="1993" name="J. Mol. Evol.">
        <title>Comparison between the complete mtDNA sequences of the blue and the fin whale, two species that can hybridize in nature.</title>
        <authorList>
            <person name="Arnason U."/>
            <person name="Gullberg A."/>
        </authorList>
    </citation>
    <scope>NUCLEOTIDE SEQUENCE [GENOMIC DNA]</scope>
</reference>
<proteinExistence type="inferred from homology"/>